<name>RBFA_ACIBY</name>
<evidence type="ECO:0000255" key="1">
    <source>
        <dbReference type="HAMAP-Rule" id="MF_00003"/>
    </source>
</evidence>
<gene>
    <name evidence="1" type="primary">rbfA</name>
    <name type="ordered locus">ABAYE3437</name>
</gene>
<organism>
    <name type="scientific">Acinetobacter baumannii (strain AYE)</name>
    <dbReference type="NCBI Taxonomy" id="509173"/>
    <lineage>
        <taxon>Bacteria</taxon>
        <taxon>Pseudomonadati</taxon>
        <taxon>Pseudomonadota</taxon>
        <taxon>Gammaproteobacteria</taxon>
        <taxon>Moraxellales</taxon>
        <taxon>Moraxellaceae</taxon>
        <taxon>Acinetobacter</taxon>
        <taxon>Acinetobacter calcoaceticus/baumannii complex</taxon>
    </lineage>
</organism>
<feature type="chain" id="PRO_1000088851" description="Ribosome-binding factor A">
    <location>
        <begin position="1"/>
        <end position="133"/>
    </location>
</feature>
<keyword id="KW-0963">Cytoplasm</keyword>
<keyword id="KW-0690">Ribosome biogenesis</keyword>
<protein>
    <recommendedName>
        <fullName evidence="1">Ribosome-binding factor A</fullName>
    </recommendedName>
</protein>
<accession>B0VE80</accession>
<sequence>MAGGQRLKRMADSVQRELSELIRQELKDPRLGGLVTISGVKVSPDLGYADVYVTVMGRELSDDQNEVAHRETLDILNKASGFLRQELSRRIKTRITPRLRFHYDKTNAYGNYMFGLIEKAVQDLPKRESDDEE</sequence>
<comment type="function">
    <text evidence="1">One of several proteins that assist in the late maturation steps of the functional core of the 30S ribosomal subunit. Associates with free 30S ribosomal subunits (but not with 30S subunits that are part of 70S ribosomes or polysomes). Required for efficient processing of 16S rRNA. May interact with the 5'-terminal helix region of 16S rRNA.</text>
</comment>
<comment type="subunit">
    <text evidence="1">Monomer. Binds 30S ribosomal subunits, but not 50S ribosomal subunits or 70S ribosomes.</text>
</comment>
<comment type="subcellular location">
    <subcellularLocation>
        <location evidence="1">Cytoplasm</location>
    </subcellularLocation>
</comment>
<comment type="similarity">
    <text evidence="1">Belongs to the RbfA family.</text>
</comment>
<dbReference type="EMBL" id="CU459141">
    <property type="protein sequence ID" value="CAM88230.1"/>
    <property type="molecule type" value="Genomic_DNA"/>
</dbReference>
<dbReference type="RefSeq" id="WP_000897046.1">
    <property type="nucleotide sequence ID" value="NZ_JBDGFB010000003.1"/>
</dbReference>
<dbReference type="SMR" id="B0VE80"/>
<dbReference type="EnsemblBacteria" id="CAM88230">
    <property type="protein sequence ID" value="CAM88230"/>
    <property type="gene ID" value="ABAYE3437"/>
</dbReference>
<dbReference type="KEGG" id="aby:ABAYE3437"/>
<dbReference type="HOGENOM" id="CLU_089475_5_0_6"/>
<dbReference type="GO" id="GO:0005829">
    <property type="term" value="C:cytosol"/>
    <property type="evidence" value="ECO:0007669"/>
    <property type="project" value="TreeGrafter"/>
</dbReference>
<dbReference type="GO" id="GO:0043024">
    <property type="term" value="F:ribosomal small subunit binding"/>
    <property type="evidence" value="ECO:0007669"/>
    <property type="project" value="TreeGrafter"/>
</dbReference>
<dbReference type="GO" id="GO:0030490">
    <property type="term" value="P:maturation of SSU-rRNA"/>
    <property type="evidence" value="ECO:0007669"/>
    <property type="project" value="UniProtKB-UniRule"/>
</dbReference>
<dbReference type="Gene3D" id="3.30.300.20">
    <property type="match status" value="1"/>
</dbReference>
<dbReference type="HAMAP" id="MF_00003">
    <property type="entry name" value="RbfA"/>
    <property type="match status" value="1"/>
</dbReference>
<dbReference type="InterPro" id="IPR015946">
    <property type="entry name" value="KH_dom-like_a/b"/>
</dbReference>
<dbReference type="InterPro" id="IPR000238">
    <property type="entry name" value="RbfA"/>
</dbReference>
<dbReference type="InterPro" id="IPR023799">
    <property type="entry name" value="RbfA_dom_sf"/>
</dbReference>
<dbReference type="NCBIfam" id="NF010389">
    <property type="entry name" value="PRK13816.1"/>
    <property type="match status" value="1"/>
</dbReference>
<dbReference type="NCBIfam" id="TIGR00082">
    <property type="entry name" value="rbfA"/>
    <property type="match status" value="1"/>
</dbReference>
<dbReference type="PANTHER" id="PTHR33515">
    <property type="entry name" value="RIBOSOME-BINDING FACTOR A, CHLOROPLASTIC-RELATED"/>
    <property type="match status" value="1"/>
</dbReference>
<dbReference type="PANTHER" id="PTHR33515:SF1">
    <property type="entry name" value="RIBOSOME-BINDING FACTOR A, CHLOROPLASTIC-RELATED"/>
    <property type="match status" value="1"/>
</dbReference>
<dbReference type="Pfam" id="PF02033">
    <property type="entry name" value="RBFA"/>
    <property type="match status" value="1"/>
</dbReference>
<dbReference type="SUPFAM" id="SSF89919">
    <property type="entry name" value="Ribosome-binding factor A, RbfA"/>
    <property type="match status" value="1"/>
</dbReference>
<reference key="1">
    <citation type="journal article" date="2008" name="PLoS ONE">
        <title>Comparative analysis of Acinetobacters: three genomes for three lifestyles.</title>
        <authorList>
            <person name="Vallenet D."/>
            <person name="Nordmann P."/>
            <person name="Barbe V."/>
            <person name="Poirel L."/>
            <person name="Mangenot S."/>
            <person name="Bataille E."/>
            <person name="Dossat C."/>
            <person name="Gas S."/>
            <person name="Kreimeyer A."/>
            <person name="Lenoble P."/>
            <person name="Oztas S."/>
            <person name="Poulain J."/>
            <person name="Segurens B."/>
            <person name="Robert C."/>
            <person name="Abergel C."/>
            <person name="Claverie J.-M."/>
            <person name="Raoult D."/>
            <person name="Medigue C."/>
            <person name="Weissenbach J."/>
            <person name="Cruveiller S."/>
        </authorList>
    </citation>
    <scope>NUCLEOTIDE SEQUENCE [LARGE SCALE GENOMIC DNA]</scope>
    <source>
        <strain>AYE</strain>
    </source>
</reference>
<proteinExistence type="inferred from homology"/>